<organism>
    <name type="scientific">Xenopus laevis</name>
    <name type="common">African clawed frog</name>
    <dbReference type="NCBI Taxonomy" id="8355"/>
    <lineage>
        <taxon>Eukaryota</taxon>
        <taxon>Metazoa</taxon>
        <taxon>Chordata</taxon>
        <taxon>Craniata</taxon>
        <taxon>Vertebrata</taxon>
        <taxon>Euteleostomi</taxon>
        <taxon>Amphibia</taxon>
        <taxon>Batrachia</taxon>
        <taxon>Anura</taxon>
        <taxon>Pipoidea</taxon>
        <taxon>Pipidae</taxon>
        <taxon>Xenopodinae</taxon>
        <taxon>Xenopus</taxon>
        <taxon>Xenopus</taxon>
    </lineage>
</organism>
<comment type="function">
    <text evidence="1">Possible role in transport between endoplasmic reticulum and Golgi.</text>
</comment>
<comment type="subcellular location">
    <subcellularLocation>
        <location>Endoplasmic reticulum-Golgi intermediate compartment membrane</location>
        <topology>Multi-pass membrane protein</topology>
    </subcellularLocation>
    <subcellularLocation>
        <location evidence="1">Golgi apparatus</location>
        <location evidence="1">cis-Golgi network membrane</location>
        <topology evidence="1">Multi-pass membrane protein</topology>
    </subcellularLocation>
    <subcellularLocation>
        <location evidence="1">Endoplasmic reticulum membrane</location>
        <topology evidence="1">Multi-pass membrane protein</topology>
    </subcellularLocation>
</comment>
<comment type="similarity">
    <text evidence="3">Belongs to the ERGIC family.</text>
</comment>
<accession>Q66KH2</accession>
<gene>
    <name type="primary">ergic3</name>
</gene>
<dbReference type="EMBL" id="BC080394">
    <property type="protein sequence ID" value="AAH80394.1"/>
    <property type="molecule type" value="mRNA"/>
</dbReference>
<dbReference type="RefSeq" id="NP_001087591.1">
    <property type="nucleotide sequence ID" value="NM_001094122.1"/>
</dbReference>
<dbReference type="SMR" id="Q66KH2"/>
<dbReference type="DNASU" id="447415"/>
<dbReference type="GeneID" id="447415"/>
<dbReference type="KEGG" id="xla:447415"/>
<dbReference type="AGR" id="Xenbase:XB-GENE-17339049"/>
<dbReference type="CTD" id="447415"/>
<dbReference type="Xenbase" id="XB-GENE-17339049">
    <property type="gene designation" value="ergic3.L"/>
</dbReference>
<dbReference type="OMA" id="QRHEGCR"/>
<dbReference type="OrthoDB" id="270930at2759"/>
<dbReference type="Proteomes" id="UP000186698">
    <property type="component" value="Chromosome 9_10L"/>
</dbReference>
<dbReference type="Bgee" id="447415">
    <property type="expression patterns" value="Expressed in egg cell and 19 other cell types or tissues"/>
</dbReference>
<dbReference type="GO" id="GO:0030134">
    <property type="term" value="C:COPII-coated ER to Golgi transport vesicle"/>
    <property type="evidence" value="ECO:0000318"/>
    <property type="project" value="GO_Central"/>
</dbReference>
<dbReference type="GO" id="GO:0005783">
    <property type="term" value="C:endoplasmic reticulum"/>
    <property type="evidence" value="ECO:0000318"/>
    <property type="project" value="GO_Central"/>
</dbReference>
<dbReference type="GO" id="GO:0005789">
    <property type="term" value="C:endoplasmic reticulum membrane"/>
    <property type="evidence" value="ECO:0000318"/>
    <property type="project" value="GO_Central"/>
</dbReference>
<dbReference type="GO" id="GO:0033116">
    <property type="term" value="C:endoplasmic reticulum-Golgi intermediate compartment membrane"/>
    <property type="evidence" value="ECO:0007669"/>
    <property type="project" value="UniProtKB-SubCell"/>
</dbReference>
<dbReference type="GO" id="GO:0000139">
    <property type="term" value="C:Golgi membrane"/>
    <property type="evidence" value="ECO:0000318"/>
    <property type="project" value="GO_Central"/>
</dbReference>
<dbReference type="GO" id="GO:0006888">
    <property type="term" value="P:endoplasmic reticulum to Golgi vesicle-mediated transport"/>
    <property type="evidence" value="ECO:0000318"/>
    <property type="project" value="GO_Central"/>
</dbReference>
<dbReference type="GO" id="GO:0006890">
    <property type="term" value="P:retrograde vesicle-mediated transport, Golgi to endoplasmic reticulum"/>
    <property type="evidence" value="ECO:0000318"/>
    <property type="project" value="GO_Central"/>
</dbReference>
<dbReference type="InterPro" id="IPR045888">
    <property type="entry name" value="Erv"/>
</dbReference>
<dbReference type="InterPro" id="IPR012936">
    <property type="entry name" value="Erv_C"/>
</dbReference>
<dbReference type="InterPro" id="IPR039542">
    <property type="entry name" value="Erv_N"/>
</dbReference>
<dbReference type="PANTHER" id="PTHR10984">
    <property type="entry name" value="ENDOPLASMIC RETICULUM-GOLGI INTERMEDIATE COMPARTMENT PROTEIN"/>
    <property type="match status" value="1"/>
</dbReference>
<dbReference type="PANTHER" id="PTHR10984:SF25">
    <property type="entry name" value="ENDOPLASMIC RETICULUM-GOLGI INTERMEDIATE COMPARTMENT PROTEIN 3"/>
    <property type="match status" value="1"/>
</dbReference>
<dbReference type="Pfam" id="PF07970">
    <property type="entry name" value="COPIIcoated_ERV"/>
    <property type="match status" value="1"/>
</dbReference>
<dbReference type="Pfam" id="PF13850">
    <property type="entry name" value="ERGIC_N"/>
    <property type="match status" value="1"/>
</dbReference>
<name>ERGI3_XENLA</name>
<sequence length="389" mass="44153">METLHRLRQFDAYPKTLEDFRVKTCGGAVVTVISGLIMLILFFSELQYYLTKEVYPELFVDKSRGDKLKINIDVIFPHMPCAYLSIDAMDVAGEQQLDVEHNLFKQRLDLDKKPVTSEADRHELGKSEEQVVFDPKTLDPNRCESCYGAETDDFSCCNSCDDVREAYRRKGWAFKTPDSIEQCKREGFSQKMQEQKNEGCQVYGFLEVNKVAGNFHFAPGKSFQQSHVHVHAVEIHDLQSFGLDNINMTHEIKHLSFGKDYPGLVNPLDGTSIVAMQSSMMFQYFVKIVPTVYVKVDGEVLRTNQFSVTRHEKMTNGLIGDQGLPGVFVLYELSPMMVKFTEKHRSFTHFLTGVCAIIGGVFTVAGLIDSLIYYSTRAIQKKIELGKAT</sequence>
<reference key="1">
    <citation type="submission" date="2004-08" db="EMBL/GenBank/DDBJ databases">
        <authorList>
            <consortium name="NIH - Xenopus Gene Collection (XGC) project"/>
        </authorList>
    </citation>
    <scope>NUCLEOTIDE SEQUENCE [LARGE SCALE MRNA]</scope>
    <source>
        <tissue>Embryo</tissue>
    </source>
</reference>
<keyword id="KW-0256">Endoplasmic reticulum</keyword>
<keyword id="KW-0931">ER-Golgi transport</keyword>
<keyword id="KW-0333">Golgi apparatus</keyword>
<keyword id="KW-0472">Membrane</keyword>
<keyword id="KW-1185">Reference proteome</keyword>
<keyword id="KW-0812">Transmembrane</keyword>
<keyword id="KW-1133">Transmembrane helix</keyword>
<keyword id="KW-0813">Transport</keyword>
<protein>
    <recommendedName>
        <fullName>Endoplasmic reticulum-Golgi intermediate compartment protein 3</fullName>
    </recommendedName>
</protein>
<evidence type="ECO:0000250" key="1"/>
<evidence type="ECO:0000255" key="2"/>
<evidence type="ECO:0000305" key="3"/>
<feature type="chain" id="PRO_0000239391" description="Endoplasmic reticulum-Golgi intermediate compartment protein 3">
    <location>
        <begin position="1"/>
        <end position="389"/>
    </location>
</feature>
<feature type="topological domain" description="Cytoplasmic" evidence="2">
    <location>
        <begin position="1"/>
        <end position="25"/>
    </location>
</feature>
<feature type="transmembrane region" description="Helical" evidence="2">
    <location>
        <begin position="26"/>
        <end position="46"/>
    </location>
</feature>
<feature type="topological domain" description="Lumenal" evidence="2">
    <location>
        <begin position="47"/>
        <end position="347"/>
    </location>
</feature>
<feature type="transmembrane region" description="Helical" evidence="2">
    <location>
        <begin position="348"/>
        <end position="368"/>
    </location>
</feature>
<feature type="topological domain" description="Cytoplasmic" evidence="2">
    <location>
        <begin position="369"/>
        <end position="389"/>
    </location>
</feature>
<proteinExistence type="evidence at transcript level"/>